<comment type="function">
    <text evidence="1">Attaches a formyl group to the free amino group of methionyl-tRNA(fMet). The formyl group appears to play a dual role in the initiator identity of N-formylmethionyl-tRNA by promoting its recognition by IF2 and preventing the misappropriation of this tRNA by the elongation apparatus.</text>
</comment>
<comment type="catalytic activity">
    <reaction evidence="1">
        <text>L-methionyl-tRNA(fMet) + (6R)-10-formyltetrahydrofolate = N-formyl-L-methionyl-tRNA(fMet) + (6S)-5,6,7,8-tetrahydrofolate + H(+)</text>
        <dbReference type="Rhea" id="RHEA:24380"/>
        <dbReference type="Rhea" id="RHEA-COMP:9952"/>
        <dbReference type="Rhea" id="RHEA-COMP:9953"/>
        <dbReference type="ChEBI" id="CHEBI:15378"/>
        <dbReference type="ChEBI" id="CHEBI:57453"/>
        <dbReference type="ChEBI" id="CHEBI:78530"/>
        <dbReference type="ChEBI" id="CHEBI:78844"/>
        <dbReference type="ChEBI" id="CHEBI:195366"/>
        <dbReference type="EC" id="2.1.2.9"/>
    </reaction>
</comment>
<comment type="similarity">
    <text evidence="1">Belongs to the Fmt family.</text>
</comment>
<name>FMT_DEHMC</name>
<gene>
    <name evidence="1" type="primary">fmt</name>
    <name type="ordered locus">cbdbA1742</name>
</gene>
<organism>
    <name type="scientific">Dehalococcoides mccartyi (strain CBDB1)</name>
    <dbReference type="NCBI Taxonomy" id="255470"/>
    <lineage>
        <taxon>Bacteria</taxon>
        <taxon>Bacillati</taxon>
        <taxon>Chloroflexota</taxon>
        <taxon>Dehalococcoidia</taxon>
        <taxon>Dehalococcoidales</taxon>
        <taxon>Dehalococcoidaceae</taxon>
        <taxon>Dehalococcoides</taxon>
    </lineage>
</organism>
<evidence type="ECO:0000255" key="1">
    <source>
        <dbReference type="HAMAP-Rule" id="MF_00182"/>
    </source>
</evidence>
<proteinExistence type="inferred from homology"/>
<keyword id="KW-0648">Protein biosynthesis</keyword>
<keyword id="KW-0808">Transferase</keyword>
<feature type="chain" id="PRO_1000190020" description="Methionyl-tRNA formyltransferase">
    <location>
        <begin position="1"/>
        <end position="312"/>
    </location>
</feature>
<feature type="binding site" evidence="1">
    <location>
        <begin position="112"/>
        <end position="115"/>
    </location>
    <ligand>
        <name>(6S)-5,6,7,8-tetrahydrofolate</name>
        <dbReference type="ChEBI" id="CHEBI:57453"/>
    </ligand>
</feature>
<sequence>MNELKIVFMGSPEFALTPLKMLLAEGYDICGVYTQPDRPAGRGRELCPPPVKTLALEHGLAVYQPQSLKKPEEQAFLKELKPDVIVVAAYGLILPQAVLDIPVYGVLNIHPSLLPRYRGATPVAATLLGGDEWAGVSLMKLEAGLDTGPVYSRSMVAIRPEDTTPILADKLAFIGGCMLLELLSQIPSLPEPKVQDNTQASYFGMVTKEMGLINWQTSAVEIERRVRAFFPWPGVFTTFNQKTLKILEAKPRNLGLGLKPSEVRVYEQSRVMVGSASGELEIIRLQLEGKAGCSAADFVRGQRNFDGVNLGV</sequence>
<reference key="1">
    <citation type="journal article" date="2005" name="Nat. Biotechnol.">
        <title>Genome sequence of the chlorinated compound-respiring bacterium Dehalococcoides species strain CBDB1.</title>
        <authorList>
            <person name="Kube M."/>
            <person name="Beck A."/>
            <person name="Zinder S.H."/>
            <person name="Kuhl H."/>
            <person name="Reinhardt R."/>
            <person name="Adrian L."/>
        </authorList>
    </citation>
    <scope>NUCLEOTIDE SEQUENCE [LARGE SCALE GENOMIC DNA]</scope>
    <source>
        <strain>CBDB1</strain>
    </source>
</reference>
<accession>Q3ZZW0</accession>
<dbReference type="EC" id="2.1.2.9" evidence="1"/>
<dbReference type="EMBL" id="AJ965256">
    <property type="protein sequence ID" value="CAI83737.1"/>
    <property type="molecule type" value="Genomic_DNA"/>
</dbReference>
<dbReference type="SMR" id="Q3ZZW0"/>
<dbReference type="KEGG" id="deh:cbdbA1742"/>
<dbReference type="HOGENOM" id="CLU_033347_2_0_0"/>
<dbReference type="Proteomes" id="UP000000433">
    <property type="component" value="Chromosome"/>
</dbReference>
<dbReference type="GO" id="GO:0005829">
    <property type="term" value="C:cytosol"/>
    <property type="evidence" value="ECO:0007669"/>
    <property type="project" value="TreeGrafter"/>
</dbReference>
<dbReference type="GO" id="GO:0004479">
    <property type="term" value="F:methionyl-tRNA formyltransferase activity"/>
    <property type="evidence" value="ECO:0007669"/>
    <property type="project" value="UniProtKB-UniRule"/>
</dbReference>
<dbReference type="CDD" id="cd08646">
    <property type="entry name" value="FMT_core_Met-tRNA-FMT_N"/>
    <property type="match status" value="1"/>
</dbReference>
<dbReference type="CDD" id="cd08704">
    <property type="entry name" value="Met_tRNA_FMT_C"/>
    <property type="match status" value="1"/>
</dbReference>
<dbReference type="Gene3D" id="3.40.50.12230">
    <property type="match status" value="1"/>
</dbReference>
<dbReference type="HAMAP" id="MF_00182">
    <property type="entry name" value="Formyl_trans"/>
    <property type="match status" value="1"/>
</dbReference>
<dbReference type="InterPro" id="IPR005794">
    <property type="entry name" value="Fmt"/>
</dbReference>
<dbReference type="InterPro" id="IPR005793">
    <property type="entry name" value="Formyl_trans_C"/>
</dbReference>
<dbReference type="InterPro" id="IPR002376">
    <property type="entry name" value="Formyl_transf_N"/>
</dbReference>
<dbReference type="InterPro" id="IPR036477">
    <property type="entry name" value="Formyl_transf_N_sf"/>
</dbReference>
<dbReference type="InterPro" id="IPR011034">
    <property type="entry name" value="Formyl_transferase-like_C_sf"/>
</dbReference>
<dbReference type="InterPro" id="IPR044135">
    <property type="entry name" value="Met-tRNA-FMT_C"/>
</dbReference>
<dbReference type="InterPro" id="IPR041711">
    <property type="entry name" value="Met-tRNA-FMT_N"/>
</dbReference>
<dbReference type="NCBIfam" id="TIGR00460">
    <property type="entry name" value="fmt"/>
    <property type="match status" value="1"/>
</dbReference>
<dbReference type="PANTHER" id="PTHR11138">
    <property type="entry name" value="METHIONYL-TRNA FORMYLTRANSFERASE"/>
    <property type="match status" value="1"/>
</dbReference>
<dbReference type="PANTHER" id="PTHR11138:SF5">
    <property type="entry name" value="METHIONYL-TRNA FORMYLTRANSFERASE, MITOCHONDRIAL"/>
    <property type="match status" value="1"/>
</dbReference>
<dbReference type="Pfam" id="PF02911">
    <property type="entry name" value="Formyl_trans_C"/>
    <property type="match status" value="1"/>
</dbReference>
<dbReference type="Pfam" id="PF00551">
    <property type="entry name" value="Formyl_trans_N"/>
    <property type="match status" value="1"/>
</dbReference>
<dbReference type="SUPFAM" id="SSF50486">
    <property type="entry name" value="FMT C-terminal domain-like"/>
    <property type="match status" value="1"/>
</dbReference>
<dbReference type="SUPFAM" id="SSF53328">
    <property type="entry name" value="Formyltransferase"/>
    <property type="match status" value="1"/>
</dbReference>
<protein>
    <recommendedName>
        <fullName evidence="1">Methionyl-tRNA formyltransferase</fullName>
        <ecNumber evidence="1">2.1.2.9</ecNumber>
    </recommendedName>
</protein>